<sequence length="294" mass="31963">MFRGAASAVITPFKGNEIDYDSFDKFLKFQLDSGINGLIVLGTTGEAPTVTSEERREIISFAVKKVGGRVPVIIGTGSNSTAHSIELSQEAFELGADGVLVVTPYYNKPTQEGLYRHYEAIAKSVPGHVIIYNVPGRTGIDIIPETVLRCAQIENIVGIKEASGNQAQVDELLRLKAKVRPEFKIWSGNDDQAFHLVCSGGDGVISVLSNVAPSQTVEMIAAALEGDLEKAREIHLKLFPLMKALFIETNPIPVKFATHLLGFGSETLRLPLTEASKRTREVVKKAMQDCGVLR</sequence>
<feature type="chain" id="PRO_1000206033" description="4-hydroxy-tetrahydrodipicolinate synthase">
    <location>
        <begin position="1"/>
        <end position="294"/>
    </location>
</feature>
<feature type="active site" description="Proton donor/acceptor" evidence="1">
    <location>
        <position position="132"/>
    </location>
</feature>
<feature type="active site" description="Schiff-base intermediate with substrate" evidence="1">
    <location>
        <position position="160"/>
    </location>
</feature>
<feature type="binding site" evidence="1">
    <location>
        <position position="44"/>
    </location>
    <ligand>
        <name>pyruvate</name>
        <dbReference type="ChEBI" id="CHEBI:15361"/>
    </ligand>
</feature>
<feature type="binding site" evidence="1">
    <location>
        <position position="205"/>
    </location>
    <ligand>
        <name>pyruvate</name>
        <dbReference type="ChEBI" id="CHEBI:15361"/>
    </ligand>
</feature>
<feature type="site" description="Part of a proton relay during catalysis" evidence="1">
    <location>
        <position position="43"/>
    </location>
</feature>
<feature type="site" description="Part of a proton relay during catalysis" evidence="1">
    <location>
        <position position="106"/>
    </location>
</feature>
<dbReference type="EC" id="4.3.3.7" evidence="1"/>
<dbReference type="EMBL" id="CP001634">
    <property type="protein sequence ID" value="ACR78834.1"/>
    <property type="molecule type" value="Genomic_DNA"/>
</dbReference>
<dbReference type="RefSeq" id="WP_012744622.1">
    <property type="nucleotide sequence ID" value="NC_012785.1"/>
</dbReference>
<dbReference type="SMR" id="C5CHX9"/>
<dbReference type="STRING" id="521045.Kole_0106"/>
<dbReference type="KEGG" id="kol:Kole_0106"/>
<dbReference type="eggNOG" id="COG0329">
    <property type="taxonomic scope" value="Bacteria"/>
</dbReference>
<dbReference type="HOGENOM" id="CLU_049343_7_1_0"/>
<dbReference type="OrthoDB" id="9782828at2"/>
<dbReference type="UniPathway" id="UPA00034">
    <property type="reaction ID" value="UER00017"/>
</dbReference>
<dbReference type="Proteomes" id="UP000002382">
    <property type="component" value="Chromosome"/>
</dbReference>
<dbReference type="GO" id="GO:0005829">
    <property type="term" value="C:cytosol"/>
    <property type="evidence" value="ECO:0007669"/>
    <property type="project" value="TreeGrafter"/>
</dbReference>
<dbReference type="GO" id="GO:0008840">
    <property type="term" value="F:4-hydroxy-tetrahydrodipicolinate synthase activity"/>
    <property type="evidence" value="ECO:0007669"/>
    <property type="project" value="UniProtKB-UniRule"/>
</dbReference>
<dbReference type="GO" id="GO:0019877">
    <property type="term" value="P:diaminopimelate biosynthetic process"/>
    <property type="evidence" value="ECO:0007669"/>
    <property type="project" value="UniProtKB-UniRule"/>
</dbReference>
<dbReference type="GO" id="GO:0009089">
    <property type="term" value="P:lysine biosynthetic process via diaminopimelate"/>
    <property type="evidence" value="ECO:0007669"/>
    <property type="project" value="UniProtKB-UniRule"/>
</dbReference>
<dbReference type="CDD" id="cd00950">
    <property type="entry name" value="DHDPS"/>
    <property type="match status" value="1"/>
</dbReference>
<dbReference type="Gene3D" id="3.20.20.70">
    <property type="entry name" value="Aldolase class I"/>
    <property type="match status" value="1"/>
</dbReference>
<dbReference type="HAMAP" id="MF_00418">
    <property type="entry name" value="DapA"/>
    <property type="match status" value="1"/>
</dbReference>
<dbReference type="InterPro" id="IPR013785">
    <property type="entry name" value="Aldolase_TIM"/>
</dbReference>
<dbReference type="InterPro" id="IPR005263">
    <property type="entry name" value="DapA"/>
</dbReference>
<dbReference type="InterPro" id="IPR002220">
    <property type="entry name" value="DapA-like"/>
</dbReference>
<dbReference type="InterPro" id="IPR020625">
    <property type="entry name" value="Schiff_base-form_aldolases_AS"/>
</dbReference>
<dbReference type="InterPro" id="IPR020624">
    <property type="entry name" value="Schiff_base-form_aldolases_CS"/>
</dbReference>
<dbReference type="NCBIfam" id="TIGR00674">
    <property type="entry name" value="dapA"/>
    <property type="match status" value="1"/>
</dbReference>
<dbReference type="PANTHER" id="PTHR12128:SF66">
    <property type="entry name" value="4-HYDROXY-2-OXOGLUTARATE ALDOLASE, MITOCHONDRIAL"/>
    <property type="match status" value="1"/>
</dbReference>
<dbReference type="PANTHER" id="PTHR12128">
    <property type="entry name" value="DIHYDRODIPICOLINATE SYNTHASE"/>
    <property type="match status" value="1"/>
</dbReference>
<dbReference type="Pfam" id="PF00701">
    <property type="entry name" value="DHDPS"/>
    <property type="match status" value="1"/>
</dbReference>
<dbReference type="PIRSF" id="PIRSF001365">
    <property type="entry name" value="DHDPS"/>
    <property type="match status" value="1"/>
</dbReference>
<dbReference type="PRINTS" id="PR00146">
    <property type="entry name" value="DHPICSNTHASE"/>
</dbReference>
<dbReference type="SMART" id="SM01130">
    <property type="entry name" value="DHDPS"/>
    <property type="match status" value="1"/>
</dbReference>
<dbReference type="SUPFAM" id="SSF51569">
    <property type="entry name" value="Aldolase"/>
    <property type="match status" value="1"/>
</dbReference>
<dbReference type="PROSITE" id="PS00665">
    <property type="entry name" value="DHDPS_1"/>
    <property type="match status" value="1"/>
</dbReference>
<dbReference type="PROSITE" id="PS00666">
    <property type="entry name" value="DHDPS_2"/>
    <property type="match status" value="1"/>
</dbReference>
<name>DAPA_KOSOT</name>
<organism>
    <name type="scientific">Kosmotoga olearia (strain ATCC BAA-1733 / DSM 21960 / TBF 19.5.1)</name>
    <dbReference type="NCBI Taxonomy" id="521045"/>
    <lineage>
        <taxon>Bacteria</taxon>
        <taxon>Thermotogati</taxon>
        <taxon>Thermotogota</taxon>
        <taxon>Thermotogae</taxon>
        <taxon>Kosmotogales</taxon>
        <taxon>Kosmotogaceae</taxon>
        <taxon>Kosmotoga</taxon>
    </lineage>
</organism>
<accession>C5CHX9</accession>
<comment type="function">
    <text evidence="1">Catalyzes the condensation of (S)-aspartate-beta-semialdehyde [(S)-ASA] and pyruvate to 4-hydroxy-tetrahydrodipicolinate (HTPA).</text>
</comment>
<comment type="catalytic activity">
    <reaction evidence="1">
        <text>L-aspartate 4-semialdehyde + pyruvate = (2S,4S)-4-hydroxy-2,3,4,5-tetrahydrodipicolinate + H2O + H(+)</text>
        <dbReference type="Rhea" id="RHEA:34171"/>
        <dbReference type="ChEBI" id="CHEBI:15361"/>
        <dbReference type="ChEBI" id="CHEBI:15377"/>
        <dbReference type="ChEBI" id="CHEBI:15378"/>
        <dbReference type="ChEBI" id="CHEBI:67139"/>
        <dbReference type="ChEBI" id="CHEBI:537519"/>
        <dbReference type="EC" id="4.3.3.7"/>
    </reaction>
</comment>
<comment type="pathway">
    <text evidence="1">Amino-acid biosynthesis; L-lysine biosynthesis via DAP pathway; (S)-tetrahydrodipicolinate from L-aspartate: step 3/4.</text>
</comment>
<comment type="subunit">
    <text evidence="1">Homotetramer; dimer of dimers.</text>
</comment>
<comment type="subcellular location">
    <subcellularLocation>
        <location evidence="1">Cytoplasm</location>
    </subcellularLocation>
</comment>
<comment type="similarity">
    <text evidence="1">Belongs to the DapA family.</text>
</comment>
<comment type="caution">
    <text evidence="2">Was originally thought to be a dihydrodipicolinate synthase (DHDPS), catalyzing the condensation of (S)-aspartate-beta-semialdehyde [(S)-ASA] and pyruvate to dihydrodipicolinate (DHDP). However, it was shown in E.coli that the product of the enzymatic reaction is not dihydrodipicolinate but in fact (4S)-4-hydroxy-2,3,4,5-tetrahydro-(2S)-dipicolinic acid (HTPA), and that the consecutive dehydration reaction leading to DHDP is not spontaneous but catalyzed by DapB.</text>
</comment>
<protein>
    <recommendedName>
        <fullName evidence="1">4-hydroxy-tetrahydrodipicolinate synthase</fullName>
        <shortName evidence="1">HTPA synthase</shortName>
        <ecNumber evidence="1">4.3.3.7</ecNumber>
    </recommendedName>
</protein>
<keyword id="KW-0028">Amino-acid biosynthesis</keyword>
<keyword id="KW-0963">Cytoplasm</keyword>
<keyword id="KW-0220">Diaminopimelate biosynthesis</keyword>
<keyword id="KW-0456">Lyase</keyword>
<keyword id="KW-0457">Lysine biosynthesis</keyword>
<keyword id="KW-1185">Reference proteome</keyword>
<keyword id="KW-0704">Schiff base</keyword>
<evidence type="ECO:0000255" key="1">
    <source>
        <dbReference type="HAMAP-Rule" id="MF_00418"/>
    </source>
</evidence>
<evidence type="ECO:0000305" key="2"/>
<proteinExistence type="inferred from homology"/>
<gene>
    <name evidence="1" type="primary">dapA</name>
    <name type="ordered locus">Kole_0106</name>
</gene>
<reference key="1">
    <citation type="submission" date="2009-06" db="EMBL/GenBank/DDBJ databases">
        <title>Complete sequence of Thermotogales bacterium TBF 19.5.1.</title>
        <authorList>
            <consortium name="US DOE Joint Genome Institute"/>
            <person name="Lucas S."/>
            <person name="Copeland A."/>
            <person name="Lapidus A."/>
            <person name="Glavina del Rio T."/>
            <person name="Tice H."/>
            <person name="Bruce D."/>
            <person name="Goodwin L."/>
            <person name="Pitluck S."/>
            <person name="Chertkov O."/>
            <person name="Brettin T."/>
            <person name="Detter J.C."/>
            <person name="Han C."/>
            <person name="Schmutz J."/>
            <person name="Larimer F."/>
            <person name="Land M."/>
            <person name="Hauser L."/>
            <person name="Kyrpides N."/>
            <person name="Ovchinnikova G."/>
            <person name="Noll K."/>
        </authorList>
    </citation>
    <scope>NUCLEOTIDE SEQUENCE [LARGE SCALE GENOMIC DNA]</scope>
    <source>
        <strain>ATCC BAA-1733 / DSM 21960 / TBF 19.5.1</strain>
    </source>
</reference>